<comment type="cofactor">
    <cofactor evidence="1">
        <name>Ca(2+)</name>
        <dbReference type="ChEBI" id="CHEBI:29108"/>
    </cofactor>
    <text evidence="1">Binds 2 calcium ions per subunit.</text>
</comment>
<comment type="subunit">
    <text>Homopentamer. Pentraxin (or pentaxin) have a discoid arrangement of 5 non-covalently bound subunits.</text>
</comment>
<comment type="subcellular location">
    <subcellularLocation>
        <location>Secreted</location>
    </subcellularLocation>
</comment>
<comment type="disease">
    <text>SAP is a precursor of amyloid component P which is found in basement membrane and associated with amyloid deposits.</text>
</comment>
<comment type="similarity">
    <text evidence="3">Belongs to the pentraxin family.</text>
</comment>
<proteinExistence type="evidence at transcript level"/>
<reference key="1">
    <citation type="journal article" date="1990" name="Biochem. J.">
        <title>Rat serum amyloid P component. Analysis of cDNA sequence and gene expression.</title>
        <authorList>
            <person name="Dowton S.B."/>
            <person name="McGrew S.D."/>
        </authorList>
    </citation>
    <scope>NUCLEOTIDE SEQUENCE [MRNA]</scope>
</reference>
<reference key="2">
    <citation type="submission" date="1993-06" db="EMBL/GenBank/DDBJ databases">
        <authorList>
            <person name="Rassouli M."/>
            <person name="Murray R.K."/>
        </authorList>
    </citation>
    <scope>NUCLEOTIDE SEQUENCE [MRNA]</scope>
    <source>
        <strain>Sprague-Dawley</strain>
        <tissue>Liver</tissue>
    </source>
</reference>
<feature type="signal peptide">
    <location>
        <begin position="1"/>
        <end position="20"/>
    </location>
</feature>
<feature type="chain" id="PRO_0000023544" description="Serum amyloid P-component">
    <location>
        <begin position="21"/>
        <end position="228"/>
    </location>
</feature>
<feature type="domain" description="Pentraxin (PTX)" evidence="2">
    <location>
        <begin position="25"/>
        <end position="224"/>
    </location>
</feature>
<feature type="binding site" evidence="2">
    <location>
        <position position="78"/>
    </location>
    <ligand>
        <name>Ca(2+)</name>
        <dbReference type="ChEBI" id="CHEBI:29108"/>
        <label>1</label>
    </ligand>
</feature>
<feature type="binding site" evidence="2">
    <location>
        <position position="79"/>
    </location>
    <ligand>
        <name>Ca(2+)</name>
        <dbReference type="ChEBI" id="CHEBI:29108"/>
        <label>1</label>
    </ligand>
</feature>
<feature type="binding site" evidence="2">
    <location>
        <position position="156"/>
    </location>
    <ligand>
        <name>Ca(2+)</name>
        <dbReference type="ChEBI" id="CHEBI:29108"/>
        <label>1</label>
    </ligand>
</feature>
<feature type="binding site" evidence="2">
    <location>
        <position position="156"/>
    </location>
    <ligand>
        <name>Ca(2+)</name>
        <dbReference type="ChEBI" id="CHEBI:29108"/>
        <label>2</label>
    </ligand>
</feature>
<feature type="binding site" evidence="2">
    <location>
        <position position="157"/>
    </location>
    <ligand>
        <name>Ca(2+)</name>
        <dbReference type="ChEBI" id="CHEBI:29108"/>
        <label>1</label>
    </ligand>
</feature>
<feature type="binding site" evidence="2">
    <location>
        <position position="158"/>
    </location>
    <ligand>
        <name>Ca(2+)</name>
        <dbReference type="ChEBI" id="CHEBI:29108"/>
        <label>1</label>
    </ligand>
</feature>
<feature type="binding site" evidence="2">
    <location>
        <position position="158"/>
    </location>
    <ligand>
        <name>Ca(2+)</name>
        <dbReference type="ChEBI" id="CHEBI:29108"/>
        <label>2</label>
    </ligand>
</feature>
<feature type="binding site" evidence="2">
    <location>
        <position position="168"/>
    </location>
    <ligand>
        <name>Ca(2+)</name>
        <dbReference type="ChEBI" id="CHEBI:29108"/>
        <label>2</label>
    </ligand>
</feature>
<feature type="glycosylation site" description="N-linked (GlcNAc...) asparagine" evidence="3">
    <location>
        <position position="52"/>
    </location>
</feature>
<feature type="disulfide bond" evidence="2">
    <location>
        <begin position="56"/>
        <end position="115"/>
    </location>
</feature>
<feature type="sequence conflict" description="In Ref. 1." evidence="3" ref="1">
    <original>D</original>
    <variation>A</variation>
    <location>
        <position position="86"/>
    </location>
</feature>
<feature type="sequence conflict" description="In Ref. 1." evidence="3" ref="1">
    <original>VG</original>
    <variation>LE</variation>
    <location>
        <begin position="88"/>
        <end position="89"/>
    </location>
</feature>
<protein>
    <recommendedName>
        <fullName>Serum amyloid P-component</fullName>
        <shortName>SAP</shortName>
    </recommendedName>
</protein>
<sequence>MDKLLLWMSVFTSLLSEAFAQTDLNQKVFVFPRESETDYVKLIPWLEKPLQNFTLCFRAYSDLSRSQSLFSYSVNSRDNELLIYKDKVGQYSLYIGNSKVTVRGLEEFPSPIHFCTSWESSSGIAEFWVNGKPWVKKGLQKGYTVKSSPSIVLGQEQDTYGGGFDKTQSFVGEIADLYMWDSVLTPENIHSVDRGFPPNPNILDWRALNYEINGYVVIKPRMWDNKSS</sequence>
<name>SAMP_RAT</name>
<dbReference type="EMBL" id="X55761">
    <property type="protein sequence ID" value="CAA39287.1"/>
    <property type="molecule type" value="mRNA"/>
</dbReference>
<dbReference type="EMBL" id="M83177">
    <property type="protein sequence ID" value="AAB59696.1"/>
    <property type="molecule type" value="mRNA"/>
</dbReference>
<dbReference type="PIR" id="S11473">
    <property type="entry name" value="S11473"/>
</dbReference>
<dbReference type="RefSeq" id="NP_058866.2">
    <property type="nucleotide sequence ID" value="NM_017170.3"/>
</dbReference>
<dbReference type="SMR" id="P23680"/>
<dbReference type="BioGRID" id="247998">
    <property type="interactions" value="1"/>
</dbReference>
<dbReference type="FunCoup" id="P23680">
    <property type="interactions" value="73"/>
</dbReference>
<dbReference type="IntAct" id="P23680">
    <property type="interactions" value="1"/>
</dbReference>
<dbReference type="MINT" id="P23680"/>
<dbReference type="STRING" id="10116.ENSRNOP00000012092"/>
<dbReference type="GlyCosmos" id="P23680">
    <property type="glycosylation" value="1 site, No reported glycans"/>
</dbReference>
<dbReference type="GlyGen" id="P23680">
    <property type="glycosylation" value="1 site"/>
</dbReference>
<dbReference type="PhosphoSitePlus" id="P23680"/>
<dbReference type="PaxDb" id="10116-ENSRNOP00000012092"/>
<dbReference type="GeneID" id="29339"/>
<dbReference type="KEGG" id="rno:29339"/>
<dbReference type="UCSC" id="RGD:68322">
    <property type="organism name" value="rat"/>
</dbReference>
<dbReference type="AGR" id="RGD:68322"/>
<dbReference type="CTD" id="325"/>
<dbReference type="RGD" id="68322">
    <property type="gene designation" value="Apcs"/>
</dbReference>
<dbReference type="eggNOG" id="ENOG502S201">
    <property type="taxonomic scope" value="Eukaryota"/>
</dbReference>
<dbReference type="HOGENOM" id="CLU_032051_2_0_1"/>
<dbReference type="InParanoid" id="P23680"/>
<dbReference type="OrthoDB" id="54130at9989"/>
<dbReference type="PhylomeDB" id="P23680"/>
<dbReference type="TreeFam" id="TF330208"/>
<dbReference type="PRO" id="PR:P23680"/>
<dbReference type="Proteomes" id="UP000002494">
    <property type="component" value="Unplaced"/>
</dbReference>
<dbReference type="GO" id="GO:0005615">
    <property type="term" value="C:extracellular space"/>
    <property type="evidence" value="ECO:0000266"/>
    <property type="project" value="RGD"/>
</dbReference>
<dbReference type="GO" id="GO:0032991">
    <property type="term" value="C:protein-containing complex"/>
    <property type="evidence" value="ECO:0000314"/>
    <property type="project" value="RGD"/>
</dbReference>
<dbReference type="GO" id="GO:0005509">
    <property type="term" value="F:calcium ion binding"/>
    <property type="evidence" value="ECO:0000266"/>
    <property type="project" value="RGD"/>
</dbReference>
<dbReference type="GO" id="GO:0030246">
    <property type="term" value="F:carbohydrate binding"/>
    <property type="evidence" value="ECO:0007669"/>
    <property type="project" value="UniProtKB-KW"/>
</dbReference>
<dbReference type="GO" id="GO:0001849">
    <property type="term" value="F:complement component C1q complex binding"/>
    <property type="evidence" value="ECO:0000266"/>
    <property type="project" value="RGD"/>
</dbReference>
<dbReference type="GO" id="GO:0042802">
    <property type="term" value="F:identical protein binding"/>
    <property type="evidence" value="ECO:0000266"/>
    <property type="project" value="RGD"/>
</dbReference>
<dbReference type="GO" id="GO:0046790">
    <property type="term" value="F:virion binding"/>
    <property type="evidence" value="ECO:0000266"/>
    <property type="project" value="RGD"/>
</dbReference>
<dbReference type="GO" id="GO:0046597">
    <property type="term" value="P:host-mediated suppression of symbiont invasion"/>
    <property type="evidence" value="ECO:0000266"/>
    <property type="project" value="RGD"/>
</dbReference>
<dbReference type="GO" id="GO:0045087">
    <property type="term" value="P:innate immune response"/>
    <property type="evidence" value="ECO:0000266"/>
    <property type="project" value="RGD"/>
</dbReference>
<dbReference type="GO" id="GO:1903019">
    <property type="term" value="P:negative regulation of glycoprotein metabolic process"/>
    <property type="evidence" value="ECO:0000266"/>
    <property type="project" value="RGD"/>
</dbReference>
<dbReference type="GO" id="GO:0045656">
    <property type="term" value="P:negative regulation of monocyte differentiation"/>
    <property type="evidence" value="ECO:0000266"/>
    <property type="project" value="RGD"/>
</dbReference>
<dbReference type="GO" id="GO:0048525">
    <property type="term" value="P:negative regulation of viral process"/>
    <property type="evidence" value="ECO:0000266"/>
    <property type="project" value="RGD"/>
</dbReference>
<dbReference type="GO" id="GO:0065003">
    <property type="term" value="P:protein-containing complex assembly"/>
    <property type="evidence" value="ECO:0000353"/>
    <property type="project" value="RGD"/>
</dbReference>
<dbReference type="CDD" id="cd00152">
    <property type="entry name" value="PTX"/>
    <property type="match status" value="1"/>
</dbReference>
<dbReference type="FunFam" id="2.60.120.200:FF:000070">
    <property type="entry name" value="Serum amyloid P-component"/>
    <property type="match status" value="1"/>
</dbReference>
<dbReference type="Gene3D" id="2.60.120.200">
    <property type="match status" value="1"/>
</dbReference>
<dbReference type="InterPro" id="IPR013320">
    <property type="entry name" value="ConA-like_dom_sf"/>
</dbReference>
<dbReference type="InterPro" id="IPR030476">
    <property type="entry name" value="Pentaxin_CS"/>
</dbReference>
<dbReference type="InterPro" id="IPR001759">
    <property type="entry name" value="Pentraxin-related"/>
</dbReference>
<dbReference type="InterPro" id="IPR051005">
    <property type="entry name" value="Pentraxin_domain"/>
</dbReference>
<dbReference type="PANTHER" id="PTHR45869">
    <property type="entry name" value="C-REACTIVE PROTEIN-RELATED"/>
    <property type="match status" value="1"/>
</dbReference>
<dbReference type="PANTHER" id="PTHR45869:SF5">
    <property type="entry name" value="SERUM AMYLOID P-COMPONENT"/>
    <property type="match status" value="1"/>
</dbReference>
<dbReference type="Pfam" id="PF00354">
    <property type="entry name" value="Pentaxin"/>
    <property type="match status" value="1"/>
</dbReference>
<dbReference type="PRINTS" id="PR00895">
    <property type="entry name" value="PENTAXIN"/>
</dbReference>
<dbReference type="SMART" id="SM00159">
    <property type="entry name" value="PTX"/>
    <property type="match status" value="1"/>
</dbReference>
<dbReference type="SUPFAM" id="SSF49899">
    <property type="entry name" value="Concanavalin A-like lectins/glucanases"/>
    <property type="match status" value="1"/>
</dbReference>
<dbReference type="PROSITE" id="PS00289">
    <property type="entry name" value="PTX_1"/>
    <property type="match status" value="1"/>
</dbReference>
<dbReference type="PROSITE" id="PS51828">
    <property type="entry name" value="PTX_2"/>
    <property type="match status" value="1"/>
</dbReference>
<organism>
    <name type="scientific">Rattus norvegicus</name>
    <name type="common">Rat</name>
    <dbReference type="NCBI Taxonomy" id="10116"/>
    <lineage>
        <taxon>Eukaryota</taxon>
        <taxon>Metazoa</taxon>
        <taxon>Chordata</taxon>
        <taxon>Craniata</taxon>
        <taxon>Vertebrata</taxon>
        <taxon>Euteleostomi</taxon>
        <taxon>Mammalia</taxon>
        <taxon>Eutheria</taxon>
        <taxon>Euarchontoglires</taxon>
        <taxon>Glires</taxon>
        <taxon>Rodentia</taxon>
        <taxon>Myomorpha</taxon>
        <taxon>Muroidea</taxon>
        <taxon>Muridae</taxon>
        <taxon>Murinae</taxon>
        <taxon>Rattus</taxon>
    </lineage>
</organism>
<accession>P23680</accession>
<accession>Q63539</accession>
<keyword id="KW-0034">Amyloid</keyword>
<keyword id="KW-0106">Calcium</keyword>
<keyword id="KW-1015">Disulfide bond</keyword>
<keyword id="KW-0325">Glycoprotein</keyword>
<keyword id="KW-0430">Lectin</keyword>
<keyword id="KW-0479">Metal-binding</keyword>
<keyword id="KW-1185">Reference proteome</keyword>
<keyword id="KW-0964">Secreted</keyword>
<keyword id="KW-0732">Signal</keyword>
<gene>
    <name type="primary">Apcs</name>
    <name type="synonym">Ptx2</name>
    <name type="synonym">Sap</name>
</gene>
<evidence type="ECO:0000250" key="1"/>
<evidence type="ECO:0000255" key="2">
    <source>
        <dbReference type="PROSITE-ProRule" id="PRU01172"/>
    </source>
</evidence>
<evidence type="ECO:0000305" key="3"/>